<accession>P62147</accession>
<accession>P07181</accession>
<accession>Q9V3T4</accession>
<protein>
    <recommendedName>
        <fullName>Calmodulin-1</fullName>
        <shortName>CaM 1</shortName>
    </recommendedName>
</protein>
<feature type="initiator methionine" description="Removed" evidence="1">
    <location>
        <position position="1"/>
    </location>
</feature>
<feature type="chain" id="PRO_0000198246" description="Calmodulin-1">
    <location>
        <begin position="2"/>
        <end position="149"/>
    </location>
</feature>
<feature type="domain" description="EF-hand 1" evidence="2">
    <location>
        <begin position="8"/>
        <end position="43"/>
    </location>
</feature>
<feature type="domain" description="EF-hand 2" evidence="2">
    <location>
        <begin position="44"/>
        <end position="79"/>
    </location>
</feature>
<feature type="domain" description="EF-hand 3" evidence="2">
    <location>
        <begin position="81"/>
        <end position="116"/>
    </location>
</feature>
<feature type="domain" description="EF-hand 4" evidence="2">
    <location>
        <begin position="117"/>
        <end position="149"/>
    </location>
</feature>
<feature type="binding site" evidence="2">
    <location>
        <position position="21"/>
    </location>
    <ligand>
        <name>Ca(2+)</name>
        <dbReference type="ChEBI" id="CHEBI:29108"/>
        <label>1</label>
    </ligand>
</feature>
<feature type="binding site" evidence="2">
    <location>
        <position position="23"/>
    </location>
    <ligand>
        <name>Ca(2+)</name>
        <dbReference type="ChEBI" id="CHEBI:29108"/>
        <label>1</label>
    </ligand>
</feature>
<feature type="binding site" evidence="2">
    <location>
        <position position="25"/>
    </location>
    <ligand>
        <name>Ca(2+)</name>
        <dbReference type="ChEBI" id="CHEBI:29108"/>
        <label>1</label>
    </ligand>
</feature>
<feature type="binding site" evidence="2">
    <location>
        <position position="27"/>
    </location>
    <ligand>
        <name>Ca(2+)</name>
        <dbReference type="ChEBI" id="CHEBI:29108"/>
        <label>1</label>
    </ligand>
</feature>
<feature type="binding site" evidence="2">
    <location>
        <position position="32"/>
    </location>
    <ligand>
        <name>Ca(2+)</name>
        <dbReference type="ChEBI" id="CHEBI:29108"/>
        <label>1</label>
    </ligand>
</feature>
<feature type="binding site" evidence="2">
    <location>
        <position position="57"/>
    </location>
    <ligand>
        <name>Ca(2+)</name>
        <dbReference type="ChEBI" id="CHEBI:29108"/>
        <label>2</label>
    </ligand>
</feature>
<feature type="binding site" evidence="2">
    <location>
        <position position="59"/>
    </location>
    <ligand>
        <name>Ca(2+)</name>
        <dbReference type="ChEBI" id="CHEBI:29108"/>
        <label>2</label>
    </ligand>
</feature>
<feature type="binding site" evidence="2">
    <location>
        <position position="61"/>
    </location>
    <ligand>
        <name>Ca(2+)</name>
        <dbReference type="ChEBI" id="CHEBI:29108"/>
        <label>2</label>
    </ligand>
</feature>
<feature type="binding site" evidence="2">
    <location>
        <position position="63"/>
    </location>
    <ligand>
        <name>Ca(2+)</name>
        <dbReference type="ChEBI" id="CHEBI:29108"/>
        <label>2</label>
    </ligand>
</feature>
<feature type="binding site" evidence="2">
    <location>
        <position position="68"/>
    </location>
    <ligand>
        <name>Ca(2+)</name>
        <dbReference type="ChEBI" id="CHEBI:29108"/>
        <label>2</label>
    </ligand>
</feature>
<feature type="binding site" evidence="2">
    <location>
        <position position="94"/>
    </location>
    <ligand>
        <name>Ca(2+)</name>
        <dbReference type="ChEBI" id="CHEBI:29108"/>
        <label>3</label>
    </ligand>
</feature>
<feature type="binding site" evidence="2">
    <location>
        <position position="96"/>
    </location>
    <ligand>
        <name>Ca(2+)</name>
        <dbReference type="ChEBI" id="CHEBI:29108"/>
        <label>3</label>
    </ligand>
</feature>
<feature type="binding site" evidence="2">
    <location>
        <position position="98"/>
    </location>
    <ligand>
        <name>Ca(2+)</name>
        <dbReference type="ChEBI" id="CHEBI:29108"/>
        <label>3</label>
    </ligand>
</feature>
<feature type="binding site" evidence="2">
    <location>
        <position position="105"/>
    </location>
    <ligand>
        <name>Ca(2+)</name>
        <dbReference type="ChEBI" id="CHEBI:29108"/>
        <label>3</label>
    </ligand>
</feature>
<feature type="binding site" evidence="2">
    <location>
        <position position="130"/>
    </location>
    <ligand>
        <name>Ca(2+)</name>
        <dbReference type="ChEBI" id="CHEBI:29108"/>
        <label>4</label>
    </ligand>
</feature>
<feature type="binding site" evidence="2">
    <location>
        <position position="132"/>
    </location>
    <ligand>
        <name>Ca(2+)</name>
        <dbReference type="ChEBI" id="CHEBI:29108"/>
        <label>4</label>
    </ligand>
</feature>
<feature type="binding site" evidence="2">
    <location>
        <position position="134"/>
    </location>
    <ligand>
        <name>Ca(2+)</name>
        <dbReference type="ChEBI" id="CHEBI:29108"/>
        <label>4</label>
    </ligand>
</feature>
<feature type="binding site" evidence="2">
    <location>
        <position position="136"/>
    </location>
    <ligand>
        <name>Ca(2+)</name>
        <dbReference type="ChEBI" id="CHEBI:29108"/>
        <label>4</label>
    </ligand>
</feature>
<feature type="binding site" evidence="2">
    <location>
        <position position="141"/>
    </location>
    <ligand>
        <name>Ca(2+)</name>
        <dbReference type="ChEBI" id="CHEBI:29108"/>
        <label>4</label>
    </ligand>
</feature>
<feature type="modified residue" description="N-acetylalanine" evidence="1">
    <location>
        <position position="2"/>
    </location>
</feature>
<feature type="modified residue" description="N6,N6,N6-trimethyllysine" evidence="1">
    <location>
        <position position="116"/>
    </location>
</feature>
<proteinExistence type="evidence at transcript level"/>
<dbReference type="EMBL" id="AB003082">
    <property type="protein sequence ID" value="BAA19787.1"/>
    <property type="molecule type" value="mRNA"/>
</dbReference>
<dbReference type="RefSeq" id="XP_035669430.1">
    <property type="nucleotide sequence ID" value="XM_035813537.1"/>
</dbReference>
<dbReference type="SMR" id="P62147"/>
<dbReference type="GeneID" id="118411306"/>
<dbReference type="eggNOG" id="KOG0027">
    <property type="taxonomic scope" value="Eukaryota"/>
</dbReference>
<dbReference type="Proteomes" id="UP000001554">
    <property type="component" value="Chromosome 1"/>
</dbReference>
<dbReference type="GO" id="GO:0005509">
    <property type="term" value="F:calcium ion binding"/>
    <property type="evidence" value="ECO:0007669"/>
    <property type="project" value="InterPro"/>
</dbReference>
<dbReference type="CDD" id="cd00051">
    <property type="entry name" value="EFh"/>
    <property type="match status" value="2"/>
</dbReference>
<dbReference type="FunFam" id="1.10.238.10:FF:000527">
    <property type="entry name" value="Calmodulin-3"/>
    <property type="match status" value="1"/>
</dbReference>
<dbReference type="Gene3D" id="1.10.238.10">
    <property type="entry name" value="EF-hand"/>
    <property type="match status" value="3"/>
</dbReference>
<dbReference type="InterPro" id="IPR050230">
    <property type="entry name" value="CALM/Myosin/TropC-like"/>
</dbReference>
<dbReference type="InterPro" id="IPR011992">
    <property type="entry name" value="EF-hand-dom_pair"/>
</dbReference>
<dbReference type="InterPro" id="IPR018247">
    <property type="entry name" value="EF_Hand_1_Ca_BS"/>
</dbReference>
<dbReference type="InterPro" id="IPR002048">
    <property type="entry name" value="EF_hand_dom"/>
</dbReference>
<dbReference type="PANTHER" id="PTHR23048:SF0">
    <property type="entry name" value="CALMODULIN LIKE 3"/>
    <property type="match status" value="1"/>
</dbReference>
<dbReference type="PANTHER" id="PTHR23048">
    <property type="entry name" value="MYOSIN LIGHT CHAIN 1, 3"/>
    <property type="match status" value="1"/>
</dbReference>
<dbReference type="Pfam" id="PF13499">
    <property type="entry name" value="EF-hand_7"/>
    <property type="match status" value="2"/>
</dbReference>
<dbReference type="SMART" id="SM00054">
    <property type="entry name" value="EFh"/>
    <property type="match status" value="4"/>
</dbReference>
<dbReference type="SUPFAM" id="SSF47473">
    <property type="entry name" value="EF-hand"/>
    <property type="match status" value="1"/>
</dbReference>
<dbReference type="PROSITE" id="PS00018">
    <property type="entry name" value="EF_HAND_1"/>
    <property type="match status" value="4"/>
</dbReference>
<dbReference type="PROSITE" id="PS50222">
    <property type="entry name" value="EF_HAND_2"/>
    <property type="match status" value="4"/>
</dbReference>
<name>CALM1_BRAFL</name>
<sequence length="149" mass="16811">MADQLTEEQIAEFKEAFSLFDKDGDGTITTKELGTVMRSLGQNPTEAELQDMINEVDADGNGTIDFPEFLTMMARKMKDTDSEEEIREAFRVFDKDGNGFISAAELRHVMTNLGEKLTDEEVDEMIREADIDGDGQVNYEEFVTMMTSK</sequence>
<keyword id="KW-0007">Acetylation</keyword>
<keyword id="KW-0106">Calcium</keyword>
<keyword id="KW-0479">Metal-binding</keyword>
<keyword id="KW-0488">Methylation</keyword>
<keyword id="KW-1185">Reference proteome</keyword>
<keyword id="KW-0677">Repeat</keyword>
<organism>
    <name type="scientific">Branchiostoma floridae</name>
    <name type="common">Florida lancelet</name>
    <name type="synonym">Amphioxus</name>
    <dbReference type="NCBI Taxonomy" id="7739"/>
    <lineage>
        <taxon>Eukaryota</taxon>
        <taxon>Metazoa</taxon>
        <taxon>Chordata</taxon>
        <taxon>Cephalochordata</taxon>
        <taxon>Leptocardii</taxon>
        <taxon>Amphioxiformes</taxon>
        <taxon>Branchiostomatidae</taxon>
        <taxon>Branchiostoma</taxon>
    </lineage>
</organism>
<reference key="1">
    <citation type="submission" date="1997-04" db="EMBL/GenBank/DDBJ databases">
        <title>Primary structure of protochordate calmodulin.</title>
        <authorList>
            <person name="Yuasa H.J."/>
            <person name="Takagi T."/>
        </authorList>
    </citation>
    <scope>NUCLEOTIDE SEQUENCE [MRNA]</scope>
</reference>
<evidence type="ECO:0000250" key="1"/>
<evidence type="ECO:0000255" key="2">
    <source>
        <dbReference type="PROSITE-ProRule" id="PRU00448"/>
    </source>
</evidence>
<evidence type="ECO:0000305" key="3"/>
<comment type="function">
    <text>Calmodulin mediates the control of a large number of enzymes, ion channels and other proteins by Ca(2+). Among the enzymes to be stimulated by the calmodulin-Ca(2+) complex are a number of protein kinases and phosphatases.</text>
</comment>
<comment type="miscellaneous">
    <text evidence="1">This protein has four functional calcium-binding sites.</text>
</comment>
<comment type="similarity">
    <text evidence="3">Belongs to the calmodulin family.</text>
</comment>